<gene>
    <name evidence="1" type="primary">aspS</name>
    <name type="ordered locus">A1S_2894</name>
</gene>
<proteinExistence type="inferred from homology"/>
<accession>A3M8Q6</accession>
<evidence type="ECO:0000255" key="1">
    <source>
        <dbReference type="HAMAP-Rule" id="MF_00044"/>
    </source>
</evidence>
<keyword id="KW-0030">Aminoacyl-tRNA synthetase</keyword>
<keyword id="KW-0067">ATP-binding</keyword>
<keyword id="KW-0963">Cytoplasm</keyword>
<keyword id="KW-0436">Ligase</keyword>
<keyword id="KW-0547">Nucleotide-binding</keyword>
<keyword id="KW-0648">Protein biosynthesis</keyword>
<dbReference type="EC" id="6.1.1.23" evidence="1"/>
<dbReference type="EMBL" id="CP000521">
    <property type="protein sequence ID" value="ABO13300.2"/>
    <property type="molecule type" value="Genomic_DNA"/>
</dbReference>
<dbReference type="RefSeq" id="WP_000986448.1">
    <property type="nucleotide sequence ID" value="NZ_CP053098.1"/>
</dbReference>
<dbReference type="SMR" id="A3M8Q6"/>
<dbReference type="KEGG" id="acb:A1S_2894"/>
<dbReference type="HOGENOM" id="CLU_014330_3_2_6"/>
<dbReference type="GO" id="GO:0005737">
    <property type="term" value="C:cytoplasm"/>
    <property type="evidence" value="ECO:0007669"/>
    <property type="project" value="UniProtKB-SubCell"/>
</dbReference>
<dbReference type="GO" id="GO:0004815">
    <property type="term" value="F:aspartate-tRNA ligase activity"/>
    <property type="evidence" value="ECO:0007669"/>
    <property type="project" value="UniProtKB-UniRule"/>
</dbReference>
<dbReference type="GO" id="GO:0050560">
    <property type="term" value="F:aspartate-tRNA(Asn) ligase activity"/>
    <property type="evidence" value="ECO:0007669"/>
    <property type="project" value="UniProtKB-EC"/>
</dbReference>
<dbReference type="GO" id="GO:0005524">
    <property type="term" value="F:ATP binding"/>
    <property type="evidence" value="ECO:0007669"/>
    <property type="project" value="UniProtKB-UniRule"/>
</dbReference>
<dbReference type="GO" id="GO:0003676">
    <property type="term" value="F:nucleic acid binding"/>
    <property type="evidence" value="ECO:0007669"/>
    <property type="project" value="InterPro"/>
</dbReference>
<dbReference type="GO" id="GO:0006422">
    <property type="term" value="P:aspartyl-tRNA aminoacylation"/>
    <property type="evidence" value="ECO:0007669"/>
    <property type="project" value="UniProtKB-UniRule"/>
</dbReference>
<dbReference type="CDD" id="cd00777">
    <property type="entry name" value="AspRS_core"/>
    <property type="match status" value="1"/>
</dbReference>
<dbReference type="CDD" id="cd04317">
    <property type="entry name" value="EcAspRS_like_N"/>
    <property type="match status" value="1"/>
</dbReference>
<dbReference type="Gene3D" id="3.30.930.10">
    <property type="entry name" value="Bira Bifunctional Protein, Domain 2"/>
    <property type="match status" value="1"/>
</dbReference>
<dbReference type="Gene3D" id="3.30.1360.30">
    <property type="entry name" value="GAD-like domain"/>
    <property type="match status" value="1"/>
</dbReference>
<dbReference type="Gene3D" id="2.40.50.140">
    <property type="entry name" value="Nucleic acid-binding proteins"/>
    <property type="match status" value="1"/>
</dbReference>
<dbReference type="HAMAP" id="MF_00044">
    <property type="entry name" value="Asp_tRNA_synth_type1"/>
    <property type="match status" value="1"/>
</dbReference>
<dbReference type="InterPro" id="IPR004364">
    <property type="entry name" value="Aa-tRNA-synt_II"/>
</dbReference>
<dbReference type="InterPro" id="IPR006195">
    <property type="entry name" value="aa-tRNA-synth_II"/>
</dbReference>
<dbReference type="InterPro" id="IPR045864">
    <property type="entry name" value="aa-tRNA-synth_II/BPL/LPL"/>
</dbReference>
<dbReference type="InterPro" id="IPR004524">
    <property type="entry name" value="Asp-tRNA-ligase_1"/>
</dbReference>
<dbReference type="InterPro" id="IPR047089">
    <property type="entry name" value="Asp-tRNA-ligase_1_N"/>
</dbReference>
<dbReference type="InterPro" id="IPR002312">
    <property type="entry name" value="Asp/Asn-tRNA-synth_IIb"/>
</dbReference>
<dbReference type="InterPro" id="IPR047090">
    <property type="entry name" value="AspRS_core"/>
</dbReference>
<dbReference type="InterPro" id="IPR004115">
    <property type="entry name" value="GAD-like_sf"/>
</dbReference>
<dbReference type="InterPro" id="IPR029351">
    <property type="entry name" value="GAD_dom"/>
</dbReference>
<dbReference type="InterPro" id="IPR012340">
    <property type="entry name" value="NA-bd_OB-fold"/>
</dbReference>
<dbReference type="InterPro" id="IPR004365">
    <property type="entry name" value="NA-bd_OB_tRNA"/>
</dbReference>
<dbReference type="NCBIfam" id="TIGR00459">
    <property type="entry name" value="aspS_bact"/>
    <property type="match status" value="1"/>
</dbReference>
<dbReference type="NCBIfam" id="NF001750">
    <property type="entry name" value="PRK00476.1"/>
    <property type="match status" value="1"/>
</dbReference>
<dbReference type="PANTHER" id="PTHR22594:SF5">
    <property type="entry name" value="ASPARTATE--TRNA LIGASE, MITOCHONDRIAL"/>
    <property type="match status" value="1"/>
</dbReference>
<dbReference type="PANTHER" id="PTHR22594">
    <property type="entry name" value="ASPARTYL/LYSYL-TRNA SYNTHETASE"/>
    <property type="match status" value="1"/>
</dbReference>
<dbReference type="Pfam" id="PF02938">
    <property type="entry name" value="GAD"/>
    <property type="match status" value="1"/>
</dbReference>
<dbReference type="Pfam" id="PF00152">
    <property type="entry name" value="tRNA-synt_2"/>
    <property type="match status" value="1"/>
</dbReference>
<dbReference type="Pfam" id="PF01336">
    <property type="entry name" value="tRNA_anti-codon"/>
    <property type="match status" value="1"/>
</dbReference>
<dbReference type="PRINTS" id="PR01042">
    <property type="entry name" value="TRNASYNTHASP"/>
</dbReference>
<dbReference type="SUPFAM" id="SSF55681">
    <property type="entry name" value="Class II aaRS and biotin synthetases"/>
    <property type="match status" value="1"/>
</dbReference>
<dbReference type="SUPFAM" id="SSF55261">
    <property type="entry name" value="GAD domain-like"/>
    <property type="match status" value="1"/>
</dbReference>
<dbReference type="SUPFAM" id="SSF50249">
    <property type="entry name" value="Nucleic acid-binding proteins"/>
    <property type="match status" value="1"/>
</dbReference>
<dbReference type="PROSITE" id="PS50862">
    <property type="entry name" value="AA_TRNA_LIGASE_II"/>
    <property type="match status" value="1"/>
</dbReference>
<sequence>MMRTHYCGSLTEAQIDQTVTLCGWVHRRRDHGGVIFLDMRDRDGLVQVVIDPDTPEAFATADKARSEYVLKITGRVRRRYEGTENPNMVSGQIEVLGKEIEVLAASETPPFPLNDDTINVSEEHRLKYRFLDIRRPEMLERLRFRSKVTNLIRNYLDDHGFLDVETPILTRATPEGARDYLVPSRVQNGSFYALPQSPQLFKQLLMVGGIDRYYQIAKCFRDEDLRADRQPEFTQIDIETSFLNDDDIMDLMEGMTIKLFNDLLGVKFEKFRRMPYSEAMRDYASDKPDLRIPLKLVDVADLMQEVEFKVFAGPAKDPKGRIAALRVPGAGSLTRSQIDEYTKFVGIYGAKGLAYIKVNEIEKGIEGLQSPIVKFIEPIVMQLLERVGAENGDIVFFGADKAKIVNDAMGALRVKIGHDLNLATCEWAPLWVVDFPMFEETDDGKWTSVHHPFTLPKSSVEDVKSNPGEALSVAYDMVLNGTEVGGGSLRIYTLEMQKAIFEALGISDEEAEEKFSFLLNALRYGAPPHGGLAFGLDRLVMLMTGATSIRDVIAFPKTKTAECPLTQAPAPVEANQLRDLGIRLREQQKKEA</sequence>
<protein>
    <recommendedName>
        <fullName evidence="1">Aspartate--tRNA(Asp/Asn) ligase</fullName>
        <ecNumber evidence="1">6.1.1.23</ecNumber>
    </recommendedName>
    <alternativeName>
        <fullName evidence="1">Aspartyl-tRNA synthetase</fullName>
        <shortName evidence="1">AspRS</shortName>
    </alternativeName>
    <alternativeName>
        <fullName evidence="1">Non-discriminating aspartyl-tRNA synthetase</fullName>
        <shortName evidence="1">ND-AspRS</shortName>
    </alternativeName>
</protein>
<organism>
    <name type="scientific">Acinetobacter baumannii (strain ATCC 17978 / DSM 105126 / CIP 53.77 / LMG 1025 / NCDC KC755 / 5377)</name>
    <dbReference type="NCBI Taxonomy" id="400667"/>
    <lineage>
        <taxon>Bacteria</taxon>
        <taxon>Pseudomonadati</taxon>
        <taxon>Pseudomonadota</taxon>
        <taxon>Gammaproteobacteria</taxon>
        <taxon>Moraxellales</taxon>
        <taxon>Moraxellaceae</taxon>
        <taxon>Acinetobacter</taxon>
        <taxon>Acinetobacter calcoaceticus/baumannii complex</taxon>
    </lineage>
</organism>
<name>SYDND_ACIBT</name>
<reference key="1">
    <citation type="journal article" date="2007" name="Genes Dev.">
        <title>New insights into Acinetobacter baumannii pathogenesis revealed by high-density pyrosequencing and transposon mutagenesis.</title>
        <authorList>
            <person name="Smith M.G."/>
            <person name="Gianoulis T.A."/>
            <person name="Pukatzki S."/>
            <person name="Mekalanos J.J."/>
            <person name="Ornston L.N."/>
            <person name="Gerstein M."/>
            <person name="Snyder M."/>
        </authorList>
    </citation>
    <scope>NUCLEOTIDE SEQUENCE [LARGE SCALE GENOMIC DNA]</scope>
    <source>
        <strain>ATCC 17978 / DSM 105126 / CIP 53.77 / LMG 1025 / NCDC KC755 / 5377</strain>
    </source>
</reference>
<comment type="function">
    <text evidence="1">Aspartyl-tRNA synthetase with relaxed tRNA specificity since it is able to aspartylate not only its cognate tRNA(Asp) but also tRNA(Asn). Reaction proceeds in two steps: L-aspartate is first activated by ATP to form Asp-AMP and then transferred to the acceptor end of tRNA(Asp/Asn).</text>
</comment>
<comment type="catalytic activity">
    <reaction evidence="1">
        <text>tRNA(Asx) + L-aspartate + ATP = L-aspartyl-tRNA(Asx) + AMP + diphosphate</text>
        <dbReference type="Rhea" id="RHEA:18349"/>
        <dbReference type="Rhea" id="RHEA-COMP:9710"/>
        <dbReference type="Rhea" id="RHEA-COMP:9711"/>
        <dbReference type="ChEBI" id="CHEBI:29991"/>
        <dbReference type="ChEBI" id="CHEBI:30616"/>
        <dbReference type="ChEBI" id="CHEBI:33019"/>
        <dbReference type="ChEBI" id="CHEBI:78442"/>
        <dbReference type="ChEBI" id="CHEBI:78516"/>
        <dbReference type="ChEBI" id="CHEBI:456215"/>
        <dbReference type="EC" id="6.1.1.23"/>
    </reaction>
</comment>
<comment type="subunit">
    <text evidence="1">Homodimer.</text>
</comment>
<comment type="subcellular location">
    <subcellularLocation>
        <location evidence="1">Cytoplasm</location>
    </subcellularLocation>
</comment>
<comment type="similarity">
    <text evidence="1">Belongs to the class-II aminoacyl-tRNA synthetase family. Type 1 subfamily.</text>
</comment>
<feature type="chain" id="PRO_1000090949" description="Aspartate--tRNA(Asp/Asn) ligase">
    <location>
        <begin position="1"/>
        <end position="592"/>
    </location>
</feature>
<feature type="region of interest" description="Aspartate" evidence="1">
    <location>
        <begin position="199"/>
        <end position="202"/>
    </location>
</feature>
<feature type="binding site" evidence="1">
    <location>
        <position position="175"/>
    </location>
    <ligand>
        <name>L-aspartate</name>
        <dbReference type="ChEBI" id="CHEBI:29991"/>
    </ligand>
</feature>
<feature type="binding site" evidence="1">
    <location>
        <begin position="221"/>
        <end position="223"/>
    </location>
    <ligand>
        <name>ATP</name>
        <dbReference type="ChEBI" id="CHEBI:30616"/>
    </ligand>
</feature>
<feature type="binding site" evidence="1">
    <location>
        <position position="221"/>
    </location>
    <ligand>
        <name>L-aspartate</name>
        <dbReference type="ChEBI" id="CHEBI:29991"/>
    </ligand>
</feature>
<feature type="binding site" evidence="1">
    <location>
        <position position="230"/>
    </location>
    <ligand>
        <name>ATP</name>
        <dbReference type="ChEBI" id="CHEBI:30616"/>
    </ligand>
</feature>
<feature type="binding site" evidence="1">
    <location>
        <position position="450"/>
    </location>
    <ligand>
        <name>L-aspartate</name>
        <dbReference type="ChEBI" id="CHEBI:29991"/>
    </ligand>
</feature>
<feature type="binding site" evidence="1">
    <location>
        <position position="483"/>
    </location>
    <ligand>
        <name>ATP</name>
        <dbReference type="ChEBI" id="CHEBI:30616"/>
    </ligand>
</feature>
<feature type="binding site" evidence="1">
    <location>
        <position position="490"/>
    </location>
    <ligand>
        <name>L-aspartate</name>
        <dbReference type="ChEBI" id="CHEBI:29991"/>
    </ligand>
</feature>
<feature type="binding site" evidence="1">
    <location>
        <begin position="535"/>
        <end position="538"/>
    </location>
    <ligand>
        <name>ATP</name>
        <dbReference type="ChEBI" id="CHEBI:30616"/>
    </ligand>
</feature>
<feature type="site" description="Important for tRNA non-discrimination" evidence="1">
    <location>
        <position position="31"/>
    </location>
</feature>
<feature type="site" description="Important for tRNA non-discrimination" evidence="1">
    <location>
        <position position="82"/>
    </location>
</feature>